<sequence length="363" mass="40675">MRVSDFNFDLPDELIARYPKTDRVSCRLLQLNGENGEIFHRTFSDVLDLIDEGDLLIFNNTRVIPARMFGRKASGGKIEVLVERMLDEHRFLAHIRSSKSPKEGAELFLGEDKLGENNGIKAVMKARHSSLFEVELSDKSTALLDVLQTIGHMPLPPYIDRPDEEADKECYQTVYSKVPGAVAAPTAGLHFDENLLEKLKAKGVNFEFVTLHVGAGTFQPVRVENIEDHVMHAEYVEVSQEVCNAIIATKKAGKRVIAVGTTSVRSIESAALSAEEFGNPDLIEPYFSDTSIFIYPGKKFRVVDCLITNFHLPESTLIMLVSAFAGYKNTMNAYKHAVQEKYRFFSYGDAMFINKNSNVRGLE</sequence>
<name>QUEA_HAEIG</name>
<feature type="chain" id="PRO_1000015219" description="S-adenosylmethionine:tRNA ribosyltransferase-isomerase">
    <location>
        <begin position="1"/>
        <end position="363"/>
    </location>
</feature>
<reference key="1">
    <citation type="journal article" date="2007" name="Genome Biol.">
        <title>Characterization and modeling of the Haemophilus influenzae core and supragenomes based on the complete genomic sequences of Rd and 12 clinical nontypeable strains.</title>
        <authorList>
            <person name="Hogg J.S."/>
            <person name="Hu F.Z."/>
            <person name="Janto B."/>
            <person name="Boissy R."/>
            <person name="Hayes J."/>
            <person name="Keefe R."/>
            <person name="Post J.C."/>
            <person name="Ehrlich G.D."/>
        </authorList>
    </citation>
    <scope>NUCLEOTIDE SEQUENCE [LARGE SCALE GENOMIC DNA]</scope>
    <source>
        <strain>PittGG</strain>
    </source>
</reference>
<protein>
    <recommendedName>
        <fullName evidence="1">S-adenosylmethionine:tRNA ribosyltransferase-isomerase</fullName>
        <ecNumber evidence="1">2.4.99.17</ecNumber>
    </recommendedName>
    <alternativeName>
        <fullName evidence="1">Queuosine biosynthesis protein QueA</fullName>
    </alternativeName>
</protein>
<proteinExistence type="inferred from homology"/>
<accession>A5UG48</accession>
<dbReference type="EC" id="2.4.99.17" evidence="1"/>
<dbReference type="EMBL" id="CP000672">
    <property type="protein sequence ID" value="ABQ99753.1"/>
    <property type="molecule type" value="Genomic_DNA"/>
</dbReference>
<dbReference type="SMR" id="A5UG48"/>
<dbReference type="KEGG" id="hiq:CGSHiGG_03855"/>
<dbReference type="HOGENOM" id="CLU_039110_1_0_6"/>
<dbReference type="UniPathway" id="UPA00392"/>
<dbReference type="Proteomes" id="UP000001990">
    <property type="component" value="Chromosome"/>
</dbReference>
<dbReference type="GO" id="GO:0005737">
    <property type="term" value="C:cytoplasm"/>
    <property type="evidence" value="ECO:0007669"/>
    <property type="project" value="UniProtKB-SubCell"/>
</dbReference>
<dbReference type="GO" id="GO:0051075">
    <property type="term" value="F:S-adenosylmethionine:tRNA ribosyltransferase-isomerase activity"/>
    <property type="evidence" value="ECO:0007669"/>
    <property type="project" value="UniProtKB-EC"/>
</dbReference>
<dbReference type="GO" id="GO:0008616">
    <property type="term" value="P:queuosine biosynthetic process"/>
    <property type="evidence" value="ECO:0007669"/>
    <property type="project" value="UniProtKB-UniRule"/>
</dbReference>
<dbReference type="GO" id="GO:0002099">
    <property type="term" value="P:tRNA wobble guanine modification"/>
    <property type="evidence" value="ECO:0007669"/>
    <property type="project" value="TreeGrafter"/>
</dbReference>
<dbReference type="FunFam" id="2.40.10.240:FF:000001">
    <property type="entry name" value="S-adenosylmethionine:tRNA ribosyltransferase-isomerase"/>
    <property type="match status" value="1"/>
</dbReference>
<dbReference type="FunFam" id="3.40.1780.10:FF:000001">
    <property type="entry name" value="S-adenosylmethionine:tRNA ribosyltransferase-isomerase"/>
    <property type="match status" value="1"/>
</dbReference>
<dbReference type="Gene3D" id="2.40.10.240">
    <property type="entry name" value="QueA-like"/>
    <property type="match status" value="1"/>
</dbReference>
<dbReference type="Gene3D" id="3.40.1780.10">
    <property type="entry name" value="QueA-like"/>
    <property type="match status" value="1"/>
</dbReference>
<dbReference type="HAMAP" id="MF_00113">
    <property type="entry name" value="QueA"/>
    <property type="match status" value="1"/>
</dbReference>
<dbReference type="InterPro" id="IPR003699">
    <property type="entry name" value="QueA"/>
</dbReference>
<dbReference type="InterPro" id="IPR042118">
    <property type="entry name" value="QueA_dom1"/>
</dbReference>
<dbReference type="InterPro" id="IPR042119">
    <property type="entry name" value="QueA_dom2"/>
</dbReference>
<dbReference type="InterPro" id="IPR036100">
    <property type="entry name" value="QueA_sf"/>
</dbReference>
<dbReference type="NCBIfam" id="NF001140">
    <property type="entry name" value="PRK00147.1"/>
    <property type="match status" value="1"/>
</dbReference>
<dbReference type="NCBIfam" id="TIGR00113">
    <property type="entry name" value="queA"/>
    <property type="match status" value="1"/>
</dbReference>
<dbReference type="PANTHER" id="PTHR30307">
    <property type="entry name" value="S-ADENOSYLMETHIONINE:TRNA RIBOSYLTRANSFERASE-ISOMERASE"/>
    <property type="match status" value="1"/>
</dbReference>
<dbReference type="PANTHER" id="PTHR30307:SF0">
    <property type="entry name" value="S-ADENOSYLMETHIONINE:TRNA RIBOSYLTRANSFERASE-ISOMERASE"/>
    <property type="match status" value="1"/>
</dbReference>
<dbReference type="Pfam" id="PF02547">
    <property type="entry name" value="Queuosine_synth"/>
    <property type="match status" value="1"/>
</dbReference>
<dbReference type="SUPFAM" id="SSF111337">
    <property type="entry name" value="QueA-like"/>
    <property type="match status" value="1"/>
</dbReference>
<comment type="function">
    <text evidence="1">Transfers and isomerizes the ribose moiety from AdoMet to the 7-aminomethyl group of 7-deazaguanine (preQ1-tRNA) to give epoxyqueuosine (oQ-tRNA).</text>
</comment>
<comment type="catalytic activity">
    <reaction evidence="1">
        <text>7-aminomethyl-7-carbaguanosine(34) in tRNA + S-adenosyl-L-methionine = epoxyqueuosine(34) in tRNA + adenine + L-methionine + 2 H(+)</text>
        <dbReference type="Rhea" id="RHEA:32155"/>
        <dbReference type="Rhea" id="RHEA-COMP:10342"/>
        <dbReference type="Rhea" id="RHEA-COMP:18582"/>
        <dbReference type="ChEBI" id="CHEBI:15378"/>
        <dbReference type="ChEBI" id="CHEBI:16708"/>
        <dbReference type="ChEBI" id="CHEBI:57844"/>
        <dbReference type="ChEBI" id="CHEBI:59789"/>
        <dbReference type="ChEBI" id="CHEBI:82833"/>
        <dbReference type="ChEBI" id="CHEBI:194443"/>
        <dbReference type="EC" id="2.4.99.17"/>
    </reaction>
</comment>
<comment type="pathway">
    <text evidence="1">tRNA modification; tRNA-queuosine biosynthesis.</text>
</comment>
<comment type="subunit">
    <text evidence="1">Monomer.</text>
</comment>
<comment type="subcellular location">
    <subcellularLocation>
        <location evidence="1">Cytoplasm</location>
    </subcellularLocation>
</comment>
<comment type="similarity">
    <text evidence="1">Belongs to the QueA family.</text>
</comment>
<keyword id="KW-0963">Cytoplasm</keyword>
<keyword id="KW-0671">Queuosine biosynthesis</keyword>
<keyword id="KW-0949">S-adenosyl-L-methionine</keyword>
<keyword id="KW-0808">Transferase</keyword>
<evidence type="ECO:0000255" key="1">
    <source>
        <dbReference type="HAMAP-Rule" id="MF_00113"/>
    </source>
</evidence>
<organism>
    <name type="scientific">Haemophilus influenzae (strain PittGG)</name>
    <dbReference type="NCBI Taxonomy" id="374931"/>
    <lineage>
        <taxon>Bacteria</taxon>
        <taxon>Pseudomonadati</taxon>
        <taxon>Pseudomonadota</taxon>
        <taxon>Gammaproteobacteria</taxon>
        <taxon>Pasteurellales</taxon>
        <taxon>Pasteurellaceae</taxon>
        <taxon>Haemophilus</taxon>
    </lineage>
</organism>
<gene>
    <name evidence="1" type="primary">queA</name>
    <name type="ordered locus">CGSHiGG_03855</name>
</gene>